<feature type="chain" id="PRO_1000083236" description="Protein SlyX homolog">
    <location>
        <begin position="1"/>
        <end position="68"/>
    </location>
</feature>
<reference key="1">
    <citation type="submission" date="2007-10" db="EMBL/GenBank/DDBJ databases">
        <title>Brucella canis ATCC 23365 whole genome shotgun sequencing project.</title>
        <authorList>
            <person name="Setubal J.C."/>
            <person name="Bowns C."/>
            <person name="Boyle S."/>
            <person name="Crasta O.R."/>
            <person name="Czar M.J."/>
            <person name="Dharmanolla C."/>
            <person name="Gillespie J.J."/>
            <person name="Kenyon R.W."/>
            <person name="Lu J."/>
            <person name="Mane S."/>
            <person name="Mohapatra S."/>
            <person name="Nagrani S."/>
            <person name="Purkayastha A."/>
            <person name="Rajasimha H.K."/>
            <person name="Shallom J.M."/>
            <person name="Shallom S."/>
            <person name="Shukla M."/>
            <person name="Snyder E.E."/>
            <person name="Sobral B.W."/>
            <person name="Wattam A.R."/>
            <person name="Will R."/>
            <person name="Williams K."/>
            <person name="Yoo H."/>
            <person name="Bruce D."/>
            <person name="Detter C."/>
            <person name="Munk C."/>
            <person name="Brettin T.S."/>
        </authorList>
    </citation>
    <scope>NUCLEOTIDE SEQUENCE [LARGE SCALE GENOMIC DNA]</scope>
    <source>
        <strain>ATCC 23365 / NCTC 10854 / RM-666</strain>
    </source>
</reference>
<evidence type="ECO:0000255" key="1">
    <source>
        <dbReference type="HAMAP-Rule" id="MF_00715"/>
    </source>
</evidence>
<accession>A9MCZ4</accession>
<organism>
    <name type="scientific">Brucella canis (strain ATCC 23365 / NCTC 10854 / RM-666)</name>
    <dbReference type="NCBI Taxonomy" id="483179"/>
    <lineage>
        <taxon>Bacteria</taxon>
        <taxon>Pseudomonadati</taxon>
        <taxon>Pseudomonadota</taxon>
        <taxon>Alphaproteobacteria</taxon>
        <taxon>Hyphomicrobiales</taxon>
        <taxon>Brucellaceae</taxon>
        <taxon>Brucella/Ochrobactrum group</taxon>
        <taxon>Brucella</taxon>
    </lineage>
</organism>
<proteinExistence type="inferred from homology"/>
<name>SLYX_BRUC2</name>
<comment type="similarity">
    <text evidence="1">Belongs to the SlyX family.</text>
</comment>
<gene>
    <name evidence="1" type="primary">slyX</name>
    <name type="ordered locus">BCAN_B1090</name>
</gene>
<keyword id="KW-1185">Reference proteome</keyword>
<dbReference type="EMBL" id="CP000873">
    <property type="protein sequence ID" value="ABX64231.1"/>
    <property type="molecule type" value="Genomic_DNA"/>
</dbReference>
<dbReference type="RefSeq" id="WP_002965586.1">
    <property type="nucleotide sequence ID" value="NC_010104.1"/>
</dbReference>
<dbReference type="SMR" id="A9MCZ4"/>
<dbReference type="KEGG" id="bcs:BCAN_B1090"/>
<dbReference type="HOGENOM" id="CLU_180796_5_0_5"/>
<dbReference type="Proteomes" id="UP000001385">
    <property type="component" value="Chromosome II"/>
</dbReference>
<dbReference type="Gene3D" id="1.20.5.300">
    <property type="match status" value="1"/>
</dbReference>
<dbReference type="HAMAP" id="MF_00715">
    <property type="entry name" value="SlyX"/>
    <property type="match status" value="1"/>
</dbReference>
<dbReference type="InterPro" id="IPR007236">
    <property type="entry name" value="SlyX"/>
</dbReference>
<dbReference type="NCBIfam" id="NF001962">
    <property type="entry name" value="PRK00736.1"/>
    <property type="match status" value="1"/>
</dbReference>
<dbReference type="PANTHER" id="PTHR36508">
    <property type="entry name" value="PROTEIN SLYX"/>
    <property type="match status" value="1"/>
</dbReference>
<dbReference type="PANTHER" id="PTHR36508:SF1">
    <property type="entry name" value="PROTEIN SLYX"/>
    <property type="match status" value="1"/>
</dbReference>
<dbReference type="Pfam" id="PF04102">
    <property type="entry name" value="SlyX"/>
    <property type="match status" value="1"/>
</dbReference>
<protein>
    <recommendedName>
        <fullName evidence="1">Protein SlyX homolog</fullName>
    </recommendedName>
</protein>
<sequence length="68" mass="7873">MSAEERLIELEIRVAEQEKTIDELSSVLTEQWKTVDQLSKKLNALTNRFLELEEQAAPDVPVTKPPHW</sequence>